<name>TMEDA_CANGA</name>
<sequence length="208" mass="24001">MKFLLLLLLAPFISALRFDLKAESKPEQMCIRDFVSEGELVVINIDTDGSLNDGNVLNLYVHDSNGNEYRRLKNFVGEQRIAFTAPATTSFDVCFENTLDSNRGNRNAKRAIELDIESGSQARDWNKISATEKLRPIELELRKIEELTDEIVDELNYLKNREERLRNTNESTNERVRNFSVLVIIVLTSLGAWQVNYLKNYFKSKHII</sequence>
<evidence type="ECO:0000250" key="1"/>
<evidence type="ECO:0000255" key="2"/>
<evidence type="ECO:0000255" key="3">
    <source>
        <dbReference type="PROSITE-ProRule" id="PRU00096"/>
    </source>
</evidence>
<evidence type="ECO:0000305" key="4"/>
<keyword id="KW-0256">Endoplasmic reticulum</keyword>
<keyword id="KW-0931">ER-Golgi transport</keyword>
<keyword id="KW-0333">Golgi apparatus</keyword>
<keyword id="KW-0472">Membrane</keyword>
<keyword id="KW-0653">Protein transport</keyword>
<keyword id="KW-1185">Reference proteome</keyword>
<keyword id="KW-0732">Signal</keyword>
<keyword id="KW-0812">Transmembrane</keyword>
<keyword id="KW-1133">Transmembrane helix</keyword>
<keyword id="KW-0813">Transport</keyword>
<dbReference type="EMBL" id="CR380954">
    <property type="protein sequence ID" value="CAG59934.1"/>
    <property type="status" value="ALT_INIT"/>
    <property type="molecule type" value="Genomic_DNA"/>
</dbReference>
<dbReference type="RefSeq" id="XP_447001.1">
    <property type="nucleotide sequence ID" value="XM_447001.1"/>
</dbReference>
<dbReference type="SMR" id="Q6FRZ3"/>
<dbReference type="FunCoup" id="Q6FRZ3">
    <property type="interactions" value="1189"/>
</dbReference>
<dbReference type="STRING" id="284593.Q6FRZ3"/>
<dbReference type="KEGG" id="cgr:2888561"/>
<dbReference type="VEuPathDB" id="FungiDB:B1J91_H04741g"/>
<dbReference type="eggNOG" id="KOG1691">
    <property type="taxonomic scope" value="Eukaryota"/>
</dbReference>
<dbReference type="HOGENOM" id="CLU_066963_3_0_1"/>
<dbReference type="InParanoid" id="Q6FRZ3"/>
<dbReference type="Proteomes" id="UP000002428">
    <property type="component" value="Chromosome H"/>
</dbReference>
<dbReference type="GO" id="GO:0005789">
    <property type="term" value="C:endoplasmic reticulum membrane"/>
    <property type="evidence" value="ECO:0007669"/>
    <property type="project" value="UniProtKB-SubCell"/>
</dbReference>
<dbReference type="GO" id="GO:0000139">
    <property type="term" value="C:Golgi membrane"/>
    <property type="evidence" value="ECO:0007669"/>
    <property type="project" value="UniProtKB-SubCell"/>
</dbReference>
<dbReference type="GO" id="GO:0006888">
    <property type="term" value="P:endoplasmic reticulum to Golgi vesicle-mediated transport"/>
    <property type="evidence" value="ECO:0007669"/>
    <property type="project" value="UniProtKB-ARBA"/>
</dbReference>
<dbReference type="GO" id="GO:0015031">
    <property type="term" value="P:protein transport"/>
    <property type="evidence" value="ECO:0007669"/>
    <property type="project" value="UniProtKB-KW"/>
</dbReference>
<dbReference type="InterPro" id="IPR015720">
    <property type="entry name" value="Emp24-like"/>
</dbReference>
<dbReference type="InterPro" id="IPR009038">
    <property type="entry name" value="GOLD_dom"/>
</dbReference>
<dbReference type="PANTHER" id="PTHR22811">
    <property type="entry name" value="TRANSMEMBRANE EMP24 DOMAIN-CONTAINING PROTEIN"/>
    <property type="match status" value="1"/>
</dbReference>
<dbReference type="Pfam" id="PF01105">
    <property type="entry name" value="EMP24_GP25L"/>
    <property type="match status" value="1"/>
</dbReference>
<dbReference type="SMART" id="SM01190">
    <property type="entry name" value="EMP24_GP25L"/>
    <property type="match status" value="1"/>
</dbReference>
<dbReference type="PROSITE" id="PS50866">
    <property type="entry name" value="GOLD"/>
    <property type="match status" value="1"/>
</dbReference>
<feature type="signal peptide" evidence="2">
    <location>
        <begin position="1"/>
        <end position="15"/>
    </location>
</feature>
<feature type="chain" id="PRO_0000237690" description="Endoplasmic reticulum vesicle protein 25">
    <location>
        <begin position="16"/>
        <end position="208"/>
    </location>
</feature>
<feature type="topological domain" description="Lumenal" evidence="2">
    <location>
        <begin position="16"/>
        <end position="177"/>
    </location>
</feature>
<feature type="transmembrane region" description="Helical" evidence="2">
    <location>
        <begin position="178"/>
        <end position="198"/>
    </location>
</feature>
<feature type="topological domain" description="Cytoplasmic" evidence="2">
    <location>
        <begin position="199"/>
        <end position="208"/>
    </location>
</feature>
<feature type="domain" description="GOLD" evidence="3">
    <location>
        <begin position="28"/>
        <end position="118"/>
    </location>
</feature>
<organism>
    <name type="scientific">Candida glabrata (strain ATCC 2001 / BCRC 20586 / JCM 3761 / NBRC 0622 / NRRL Y-65 / CBS 138)</name>
    <name type="common">Yeast</name>
    <name type="synonym">Nakaseomyces glabratus</name>
    <dbReference type="NCBI Taxonomy" id="284593"/>
    <lineage>
        <taxon>Eukaryota</taxon>
        <taxon>Fungi</taxon>
        <taxon>Dikarya</taxon>
        <taxon>Ascomycota</taxon>
        <taxon>Saccharomycotina</taxon>
        <taxon>Saccharomycetes</taxon>
        <taxon>Saccharomycetales</taxon>
        <taxon>Saccharomycetaceae</taxon>
        <taxon>Nakaseomyces</taxon>
    </lineage>
</organism>
<accession>Q6FRZ3</accession>
<protein>
    <recommendedName>
        <fullName>Endoplasmic reticulum vesicle protein 25</fullName>
    </recommendedName>
</protein>
<gene>
    <name type="primary">ERV25</name>
    <name type="ordered locus">CAGL0H04741g</name>
</gene>
<comment type="function">
    <text evidence="1">Constituent of COPII-coated endoplasmic reticulum-derived transport vesicles. Required for efficient transport of a subset of secretory proteins to the Golgi. Facilitates retrograde transport from the Golgi to the endoplasmic reticulum (By similarity).</text>
</comment>
<comment type="subcellular location">
    <subcellularLocation>
        <location evidence="1">Endoplasmic reticulum membrane</location>
        <topology evidence="1">Single-pass type I membrane protein</topology>
    </subcellularLocation>
    <subcellularLocation>
        <location evidence="1">Golgi apparatus membrane</location>
        <topology evidence="1">Single-pass type I membrane protein</topology>
    </subcellularLocation>
    <text evidence="1">Recycles between endoplasmic reticulum and Golgi.</text>
</comment>
<comment type="similarity">
    <text evidence="4">Belongs to the EMP24/GP25L family.</text>
</comment>
<comment type="sequence caution" evidence="4">
    <conflict type="erroneous initiation">
        <sequence resource="EMBL-CDS" id="CAG59934"/>
    </conflict>
</comment>
<reference key="1">
    <citation type="journal article" date="2004" name="Nature">
        <title>Genome evolution in yeasts.</title>
        <authorList>
            <person name="Dujon B."/>
            <person name="Sherman D."/>
            <person name="Fischer G."/>
            <person name="Durrens P."/>
            <person name="Casaregola S."/>
            <person name="Lafontaine I."/>
            <person name="de Montigny J."/>
            <person name="Marck C."/>
            <person name="Neuveglise C."/>
            <person name="Talla E."/>
            <person name="Goffard N."/>
            <person name="Frangeul L."/>
            <person name="Aigle M."/>
            <person name="Anthouard V."/>
            <person name="Babour A."/>
            <person name="Barbe V."/>
            <person name="Barnay S."/>
            <person name="Blanchin S."/>
            <person name="Beckerich J.-M."/>
            <person name="Beyne E."/>
            <person name="Bleykasten C."/>
            <person name="Boisrame A."/>
            <person name="Boyer J."/>
            <person name="Cattolico L."/>
            <person name="Confanioleri F."/>
            <person name="de Daruvar A."/>
            <person name="Despons L."/>
            <person name="Fabre E."/>
            <person name="Fairhead C."/>
            <person name="Ferry-Dumazet H."/>
            <person name="Groppi A."/>
            <person name="Hantraye F."/>
            <person name="Hennequin C."/>
            <person name="Jauniaux N."/>
            <person name="Joyet P."/>
            <person name="Kachouri R."/>
            <person name="Kerrest A."/>
            <person name="Koszul R."/>
            <person name="Lemaire M."/>
            <person name="Lesur I."/>
            <person name="Ma L."/>
            <person name="Muller H."/>
            <person name="Nicaud J.-M."/>
            <person name="Nikolski M."/>
            <person name="Oztas S."/>
            <person name="Ozier-Kalogeropoulos O."/>
            <person name="Pellenz S."/>
            <person name="Potier S."/>
            <person name="Richard G.-F."/>
            <person name="Straub M.-L."/>
            <person name="Suleau A."/>
            <person name="Swennen D."/>
            <person name="Tekaia F."/>
            <person name="Wesolowski-Louvel M."/>
            <person name="Westhof E."/>
            <person name="Wirth B."/>
            <person name="Zeniou-Meyer M."/>
            <person name="Zivanovic Y."/>
            <person name="Bolotin-Fukuhara M."/>
            <person name="Thierry A."/>
            <person name="Bouchier C."/>
            <person name="Caudron B."/>
            <person name="Scarpelli C."/>
            <person name="Gaillardin C."/>
            <person name="Weissenbach J."/>
            <person name="Wincker P."/>
            <person name="Souciet J.-L."/>
        </authorList>
    </citation>
    <scope>NUCLEOTIDE SEQUENCE [LARGE SCALE GENOMIC DNA]</scope>
    <source>
        <strain>ATCC 2001 / BCRC 20586 / JCM 3761 / NBRC 0622 / NRRL Y-65 / CBS 138</strain>
    </source>
</reference>
<proteinExistence type="inferred from homology"/>